<protein>
    <recommendedName>
        <fullName evidence="1">Polyribonucleotide nucleotidyltransferase 4</fullName>
        <ecNumber evidence="1">2.7.7.8</ecNumber>
    </recommendedName>
    <alternativeName>
        <fullName evidence="1">Polynucleotide phosphorylase 4</fullName>
        <shortName evidence="1">PNPase 4</shortName>
    </alternativeName>
</protein>
<reference key="1">
    <citation type="journal article" date="2016" name="Genome Announc.">
        <title>Complete genome sequence of Alkaliphilus metalliredigens strain QYMF, an alkaliphilic and metal-reducing bacterium isolated from borax-contaminated leachate ponds.</title>
        <authorList>
            <person name="Hwang C."/>
            <person name="Copeland A."/>
            <person name="Lucas S."/>
            <person name="Lapidus A."/>
            <person name="Barry K."/>
            <person name="Detter J.C."/>
            <person name="Glavina Del Rio T."/>
            <person name="Hammon N."/>
            <person name="Israni S."/>
            <person name="Dalin E."/>
            <person name="Tice H."/>
            <person name="Pitluck S."/>
            <person name="Chertkov O."/>
            <person name="Brettin T."/>
            <person name="Bruce D."/>
            <person name="Han C."/>
            <person name="Schmutz J."/>
            <person name="Larimer F."/>
            <person name="Land M.L."/>
            <person name="Hauser L."/>
            <person name="Kyrpides N."/>
            <person name="Mikhailova N."/>
            <person name="Ye Q."/>
            <person name="Zhou J."/>
            <person name="Richardson P."/>
            <person name="Fields M.W."/>
        </authorList>
    </citation>
    <scope>NUCLEOTIDE SEQUENCE [LARGE SCALE GENOMIC DNA]</scope>
    <source>
        <strain>QYMF</strain>
    </source>
</reference>
<feature type="chain" id="PRO_0000329494" description="Polyribonucleotide nucleotidyltransferase 4">
    <location>
        <begin position="1"/>
        <end position="704"/>
    </location>
</feature>
<feature type="domain" description="KH" evidence="1">
    <location>
        <begin position="550"/>
        <end position="609"/>
    </location>
</feature>
<feature type="domain" description="S1 motif" evidence="1">
    <location>
        <begin position="619"/>
        <end position="687"/>
    </location>
</feature>
<feature type="binding site" evidence="1">
    <location>
        <position position="483"/>
    </location>
    <ligand>
        <name>Mg(2+)</name>
        <dbReference type="ChEBI" id="CHEBI:18420"/>
    </ligand>
</feature>
<feature type="binding site" evidence="1">
    <location>
        <position position="489"/>
    </location>
    <ligand>
        <name>Mg(2+)</name>
        <dbReference type="ChEBI" id="CHEBI:18420"/>
    </ligand>
</feature>
<gene>
    <name evidence="1" type="primary">pnp4</name>
    <name type="ordered locus">Amet_2667</name>
</gene>
<organism>
    <name type="scientific">Alkaliphilus metalliredigens (strain QYMF)</name>
    <dbReference type="NCBI Taxonomy" id="293826"/>
    <lineage>
        <taxon>Bacteria</taxon>
        <taxon>Bacillati</taxon>
        <taxon>Bacillota</taxon>
        <taxon>Clostridia</taxon>
        <taxon>Peptostreptococcales</taxon>
        <taxon>Natronincolaceae</taxon>
        <taxon>Alkaliphilus</taxon>
    </lineage>
</organism>
<keyword id="KW-0963">Cytoplasm</keyword>
<keyword id="KW-0460">Magnesium</keyword>
<keyword id="KW-0479">Metal-binding</keyword>
<keyword id="KW-0548">Nucleotidyltransferase</keyword>
<keyword id="KW-1185">Reference proteome</keyword>
<keyword id="KW-0694">RNA-binding</keyword>
<keyword id="KW-0808">Transferase</keyword>
<comment type="function">
    <text evidence="1">Involved in mRNA degradation. Catalyzes the phosphorolysis of single-stranded polyribonucleotides processively in the 3'- to 5'-direction.</text>
</comment>
<comment type="catalytic activity">
    <reaction evidence="1">
        <text>RNA(n+1) + phosphate = RNA(n) + a ribonucleoside 5'-diphosphate</text>
        <dbReference type="Rhea" id="RHEA:22096"/>
        <dbReference type="Rhea" id="RHEA-COMP:14527"/>
        <dbReference type="Rhea" id="RHEA-COMP:17342"/>
        <dbReference type="ChEBI" id="CHEBI:43474"/>
        <dbReference type="ChEBI" id="CHEBI:57930"/>
        <dbReference type="ChEBI" id="CHEBI:140395"/>
        <dbReference type="EC" id="2.7.7.8"/>
    </reaction>
</comment>
<comment type="cofactor">
    <cofactor evidence="1">
        <name>Mg(2+)</name>
        <dbReference type="ChEBI" id="CHEBI:18420"/>
    </cofactor>
</comment>
<comment type="subcellular location">
    <subcellularLocation>
        <location evidence="1">Cytoplasm</location>
    </subcellularLocation>
</comment>
<comment type="similarity">
    <text evidence="1">Belongs to the polyribonucleotide nucleotidyltransferase family.</text>
</comment>
<dbReference type="EC" id="2.7.7.8" evidence="1"/>
<dbReference type="EMBL" id="CP000724">
    <property type="protein sequence ID" value="ABR48819.1"/>
    <property type="molecule type" value="Genomic_DNA"/>
</dbReference>
<dbReference type="RefSeq" id="WP_012063792.1">
    <property type="nucleotide sequence ID" value="NC_009633.1"/>
</dbReference>
<dbReference type="SMR" id="A6TRK1"/>
<dbReference type="STRING" id="293826.Amet_2667"/>
<dbReference type="KEGG" id="amt:Amet_2667"/>
<dbReference type="eggNOG" id="COG1185">
    <property type="taxonomic scope" value="Bacteria"/>
</dbReference>
<dbReference type="HOGENOM" id="CLU_004217_2_2_9"/>
<dbReference type="OrthoDB" id="9804305at2"/>
<dbReference type="Proteomes" id="UP000001572">
    <property type="component" value="Chromosome"/>
</dbReference>
<dbReference type="GO" id="GO:0005829">
    <property type="term" value="C:cytosol"/>
    <property type="evidence" value="ECO:0007669"/>
    <property type="project" value="TreeGrafter"/>
</dbReference>
<dbReference type="GO" id="GO:0000175">
    <property type="term" value="F:3'-5'-RNA exonuclease activity"/>
    <property type="evidence" value="ECO:0007669"/>
    <property type="project" value="TreeGrafter"/>
</dbReference>
<dbReference type="GO" id="GO:0000287">
    <property type="term" value="F:magnesium ion binding"/>
    <property type="evidence" value="ECO:0007669"/>
    <property type="project" value="UniProtKB-UniRule"/>
</dbReference>
<dbReference type="GO" id="GO:0004654">
    <property type="term" value="F:polyribonucleotide nucleotidyltransferase activity"/>
    <property type="evidence" value="ECO:0007669"/>
    <property type="project" value="UniProtKB-UniRule"/>
</dbReference>
<dbReference type="GO" id="GO:0003723">
    <property type="term" value="F:RNA binding"/>
    <property type="evidence" value="ECO:0007669"/>
    <property type="project" value="UniProtKB-UniRule"/>
</dbReference>
<dbReference type="GO" id="GO:0006402">
    <property type="term" value="P:mRNA catabolic process"/>
    <property type="evidence" value="ECO:0007669"/>
    <property type="project" value="UniProtKB-UniRule"/>
</dbReference>
<dbReference type="GO" id="GO:0006396">
    <property type="term" value="P:RNA processing"/>
    <property type="evidence" value="ECO:0007669"/>
    <property type="project" value="InterPro"/>
</dbReference>
<dbReference type="CDD" id="cd02393">
    <property type="entry name" value="KH-I_PNPase"/>
    <property type="match status" value="1"/>
</dbReference>
<dbReference type="CDD" id="cd11363">
    <property type="entry name" value="RNase_PH_PNPase_1"/>
    <property type="match status" value="1"/>
</dbReference>
<dbReference type="CDD" id="cd11364">
    <property type="entry name" value="RNase_PH_PNPase_2"/>
    <property type="match status" value="1"/>
</dbReference>
<dbReference type="CDD" id="cd04472">
    <property type="entry name" value="S1_PNPase"/>
    <property type="match status" value="1"/>
</dbReference>
<dbReference type="FunFam" id="2.40.50.140:FF:000023">
    <property type="entry name" value="Polyribonucleotide nucleotidyltransferase"/>
    <property type="match status" value="1"/>
</dbReference>
<dbReference type="FunFam" id="3.30.1370.10:FF:000001">
    <property type="entry name" value="Polyribonucleotide nucleotidyltransferase"/>
    <property type="match status" value="1"/>
</dbReference>
<dbReference type="FunFam" id="3.30.230.70:FF:000001">
    <property type="entry name" value="Polyribonucleotide nucleotidyltransferase"/>
    <property type="match status" value="1"/>
</dbReference>
<dbReference type="FunFam" id="3.30.230.70:FF:000002">
    <property type="entry name" value="Polyribonucleotide nucleotidyltransferase"/>
    <property type="match status" value="1"/>
</dbReference>
<dbReference type="Gene3D" id="3.30.230.70">
    <property type="entry name" value="GHMP Kinase, N-terminal domain"/>
    <property type="match status" value="2"/>
</dbReference>
<dbReference type="Gene3D" id="3.30.1370.10">
    <property type="entry name" value="K Homology domain, type 1"/>
    <property type="match status" value="1"/>
</dbReference>
<dbReference type="Gene3D" id="2.40.50.140">
    <property type="entry name" value="Nucleic acid-binding proteins"/>
    <property type="match status" value="1"/>
</dbReference>
<dbReference type="HAMAP" id="MF_01595">
    <property type="entry name" value="PNPase"/>
    <property type="match status" value="1"/>
</dbReference>
<dbReference type="InterPro" id="IPR001247">
    <property type="entry name" value="ExoRNase_PH_dom1"/>
</dbReference>
<dbReference type="InterPro" id="IPR015847">
    <property type="entry name" value="ExoRNase_PH_dom2"/>
</dbReference>
<dbReference type="InterPro" id="IPR036345">
    <property type="entry name" value="ExoRNase_PH_dom2_sf"/>
</dbReference>
<dbReference type="InterPro" id="IPR004087">
    <property type="entry name" value="KH_dom"/>
</dbReference>
<dbReference type="InterPro" id="IPR004088">
    <property type="entry name" value="KH_dom_type_1"/>
</dbReference>
<dbReference type="InterPro" id="IPR036612">
    <property type="entry name" value="KH_dom_type_1_sf"/>
</dbReference>
<dbReference type="InterPro" id="IPR012340">
    <property type="entry name" value="NA-bd_OB-fold"/>
</dbReference>
<dbReference type="InterPro" id="IPR012162">
    <property type="entry name" value="PNPase"/>
</dbReference>
<dbReference type="InterPro" id="IPR027408">
    <property type="entry name" value="PNPase/RNase_PH_dom_sf"/>
</dbReference>
<dbReference type="InterPro" id="IPR015848">
    <property type="entry name" value="PNPase_PH_RNA-bd_bac/org-type"/>
</dbReference>
<dbReference type="InterPro" id="IPR020568">
    <property type="entry name" value="Ribosomal_Su5_D2-typ_SF"/>
</dbReference>
<dbReference type="InterPro" id="IPR003029">
    <property type="entry name" value="S1_domain"/>
</dbReference>
<dbReference type="NCBIfam" id="TIGR03591">
    <property type="entry name" value="polynuc_phos"/>
    <property type="match status" value="1"/>
</dbReference>
<dbReference type="NCBIfam" id="NF008805">
    <property type="entry name" value="PRK11824.1"/>
    <property type="match status" value="1"/>
</dbReference>
<dbReference type="PANTHER" id="PTHR11252">
    <property type="entry name" value="POLYRIBONUCLEOTIDE NUCLEOTIDYLTRANSFERASE"/>
    <property type="match status" value="1"/>
</dbReference>
<dbReference type="PANTHER" id="PTHR11252:SF0">
    <property type="entry name" value="POLYRIBONUCLEOTIDE NUCLEOTIDYLTRANSFERASE 1, MITOCHONDRIAL"/>
    <property type="match status" value="1"/>
</dbReference>
<dbReference type="Pfam" id="PF00013">
    <property type="entry name" value="KH_1"/>
    <property type="match status" value="1"/>
</dbReference>
<dbReference type="Pfam" id="PF03726">
    <property type="entry name" value="PNPase"/>
    <property type="match status" value="1"/>
</dbReference>
<dbReference type="Pfam" id="PF01138">
    <property type="entry name" value="RNase_PH"/>
    <property type="match status" value="2"/>
</dbReference>
<dbReference type="Pfam" id="PF03725">
    <property type="entry name" value="RNase_PH_C"/>
    <property type="match status" value="2"/>
</dbReference>
<dbReference type="Pfam" id="PF00575">
    <property type="entry name" value="S1"/>
    <property type="match status" value="1"/>
</dbReference>
<dbReference type="PIRSF" id="PIRSF005499">
    <property type="entry name" value="PNPase"/>
    <property type="match status" value="1"/>
</dbReference>
<dbReference type="SMART" id="SM00322">
    <property type="entry name" value="KH"/>
    <property type="match status" value="1"/>
</dbReference>
<dbReference type="SMART" id="SM00316">
    <property type="entry name" value="S1"/>
    <property type="match status" value="1"/>
</dbReference>
<dbReference type="SUPFAM" id="SSF54791">
    <property type="entry name" value="Eukaryotic type KH-domain (KH-domain type I)"/>
    <property type="match status" value="1"/>
</dbReference>
<dbReference type="SUPFAM" id="SSF50249">
    <property type="entry name" value="Nucleic acid-binding proteins"/>
    <property type="match status" value="1"/>
</dbReference>
<dbReference type="SUPFAM" id="SSF55666">
    <property type="entry name" value="Ribonuclease PH domain 2-like"/>
    <property type="match status" value="2"/>
</dbReference>
<dbReference type="SUPFAM" id="SSF54211">
    <property type="entry name" value="Ribosomal protein S5 domain 2-like"/>
    <property type="match status" value="2"/>
</dbReference>
<dbReference type="PROSITE" id="PS50084">
    <property type="entry name" value="KH_TYPE_1"/>
    <property type="match status" value="1"/>
</dbReference>
<dbReference type="PROSITE" id="PS50126">
    <property type="entry name" value="S1"/>
    <property type="match status" value="1"/>
</dbReference>
<accession>A6TRK1</accession>
<sequence length="704" mass="77579">MIKQFQTELAGKTLHVEIGKYAEQASGSCMVRYGDTTVLVNATASKSPREGIDFFPLSVDYEEKLYAVGKIPGGFIKREARPSEKAVLTSRLIDRPIRPLFPKGYRNEVQVIATVMSVDKDYAPDIVAMIGSSIALSISDIPFGGPTGSVNVGLVNGEFVLNPTSDQRAISDIDLVVSGTKDAIMMIESGANEVTEDQMLDALMFAHEEIKTIVAFIEEIVAEVGKPKQEVQLFAIDETLDMEVRVFAKDKIVTAMKTFDKMERNERLDNVKKEILVHFSKQYENELKSIVEVINSIIKEQFRYMITHDKVRPDERALDEIRPITSEVGILPRTHGTGLFTRGQTQVLTVATLGALGEVQILDGLGEEESKRYMHHYNFPPYSVGEAKFLRGPGRREIGHGALAERALLPMVPSQDDFPYAIRLVSEVLSSNGSSSQASVCGSTLALLDAGVPIKDMVAGIAMGLVKENDKIAILSDIQGMEDALGDMDFKVAGTDKGITAIQMDIKIKGIHKDILKDALEQARVGRLHILDKMKKAIDKPRPELSPFAPRVLKMKIHPDKIRDVIGSGGKTINRIIDETGVKIDIDNDGTIFIAAESQEAVEKAIIIIENIIKDPEVGQNYTGKVIKIMNFGAFLEILPGKEGLLHVSNIAHERVNKVEDVLEVGQEIEVKVMEIDQQGKINLSRKALLPKESKAENTKEEKA</sequence>
<proteinExistence type="inferred from homology"/>
<evidence type="ECO:0000255" key="1">
    <source>
        <dbReference type="HAMAP-Rule" id="MF_01595"/>
    </source>
</evidence>
<name>PNP4_ALKMQ</name>